<accession>Q18446</accession>
<keyword id="KW-1185">Reference proteome</keyword>
<evidence type="ECO:0000305" key="1"/>
<comment type="function">
    <text>Component of the biogenesis of lysosome-related organelles complex-1 (BLOC-1) involved in gut granule biogenesis.</text>
</comment>
<comment type="subunit">
    <text>Component of the biogenesis of lysosome-related organelles complex-1 (BLOC-1) composed at least of blos-1, blos-2, blos-4, dsbn-1, glo-2, mutd-1 and snpn-1.</text>
</comment>
<comment type="similarity">
    <text evidence="1">Belongs to the BLOC1S5 family.</text>
</comment>
<name>BL1S5_CAEEL</name>
<protein>
    <recommendedName>
        <fullName>Biogenesis of lysosome-related organelles complex 1 subunit 5</fullName>
        <shortName>BLOC-1 subunit 5</shortName>
    </recommendedName>
    <alternativeName>
        <fullName>Protein Muted homolog</fullName>
    </alternativeName>
</protein>
<dbReference type="EMBL" id="FO080770">
    <property type="protein sequence ID" value="CCD66607.1"/>
    <property type="molecule type" value="Genomic_DNA"/>
</dbReference>
<dbReference type="PIR" id="T29284">
    <property type="entry name" value="T29284"/>
</dbReference>
<dbReference type="RefSeq" id="NP_501119.2">
    <property type="nucleotide sequence ID" value="NM_068718.3"/>
</dbReference>
<dbReference type="SMR" id="Q18446"/>
<dbReference type="BioGRID" id="48041">
    <property type="interactions" value="1"/>
</dbReference>
<dbReference type="ComplexPortal" id="CPX-479">
    <property type="entry name" value="Bloc-1 complex"/>
</dbReference>
<dbReference type="FunCoup" id="Q18446">
    <property type="interactions" value="6"/>
</dbReference>
<dbReference type="STRING" id="6239.C34D4.13.1"/>
<dbReference type="PaxDb" id="6239-C34D4.13"/>
<dbReference type="PeptideAtlas" id="Q18446"/>
<dbReference type="EnsemblMetazoa" id="C34D4.13.1">
    <property type="protein sequence ID" value="C34D4.13.1"/>
    <property type="gene ID" value="WBGene00016404"/>
</dbReference>
<dbReference type="GeneID" id="183210"/>
<dbReference type="KEGG" id="cel:CELE_C34D4.13"/>
<dbReference type="UCSC" id="C34D4.13">
    <property type="organism name" value="c. elegans"/>
</dbReference>
<dbReference type="AGR" id="WB:WBGene00016404"/>
<dbReference type="CTD" id="183210"/>
<dbReference type="WormBase" id="C34D4.13">
    <property type="protein sequence ID" value="CE34735"/>
    <property type="gene ID" value="WBGene00016404"/>
    <property type="gene designation" value="mutd-1"/>
</dbReference>
<dbReference type="eggNOG" id="ENOG502SSKI">
    <property type="taxonomic scope" value="Eukaryota"/>
</dbReference>
<dbReference type="HOGENOM" id="CLU_1929446_0_0_1"/>
<dbReference type="InParanoid" id="Q18446"/>
<dbReference type="OMA" id="EPKYQKE"/>
<dbReference type="OrthoDB" id="5788338at2759"/>
<dbReference type="PRO" id="PR:Q18446"/>
<dbReference type="Proteomes" id="UP000001940">
    <property type="component" value="Chromosome IV"/>
</dbReference>
<dbReference type="Bgee" id="WBGene00016404">
    <property type="expression patterns" value="Expressed in embryo and 3 other cell types or tissues"/>
</dbReference>
<dbReference type="GO" id="GO:0031082">
    <property type="term" value="C:BLOC complex"/>
    <property type="evidence" value="ECO:0000303"/>
    <property type="project" value="ComplexPortal"/>
</dbReference>
<dbReference type="GO" id="GO:0031083">
    <property type="term" value="C:BLOC-1 complex"/>
    <property type="evidence" value="ECO:0000304"/>
    <property type="project" value="UniProtKB"/>
</dbReference>
<dbReference type="GO" id="GO:0030133">
    <property type="term" value="C:transport vesicle"/>
    <property type="evidence" value="ECO:0007669"/>
    <property type="project" value="InterPro"/>
</dbReference>
<dbReference type="GO" id="GO:0016197">
    <property type="term" value="P:endosomal transport"/>
    <property type="evidence" value="ECO:0000315"/>
    <property type="project" value="UniProtKB"/>
</dbReference>
<dbReference type="GO" id="GO:1904757">
    <property type="term" value="P:positive regulation of gut granule assembly"/>
    <property type="evidence" value="ECO:0000303"/>
    <property type="project" value="ComplexPortal"/>
</dbReference>
<dbReference type="InterPro" id="IPR017243">
    <property type="entry name" value="Bloc1s5"/>
</dbReference>
<dbReference type="Pfam" id="PF14942">
    <property type="entry name" value="Muted"/>
    <property type="match status" value="1"/>
</dbReference>
<proteinExistence type="inferred from homology"/>
<organism>
    <name type="scientific">Caenorhabditis elegans</name>
    <dbReference type="NCBI Taxonomy" id="6239"/>
    <lineage>
        <taxon>Eukaryota</taxon>
        <taxon>Metazoa</taxon>
        <taxon>Ecdysozoa</taxon>
        <taxon>Nematoda</taxon>
        <taxon>Chromadorea</taxon>
        <taxon>Rhabditida</taxon>
        <taxon>Rhabditina</taxon>
        <taxon>Rhabditomorpha</taxon>
        <taxon>Rhabditoidea</taxon>
        <taxon>Rhabditidae</taxon>
        <taxon>Peloderinae</taxon>
        <taxon>Caenorhabditis</taxon>
    </lineage>
</organism>
<reference key="1">
    <citation type="journal article" date="1998" name="Science">
        <title>Genome sequence of the nematode C. elegans: a platform for investigating biology.</title>
        <authorList>
            <consortium name="The C. elegans sequencing consortium"/>
        </authorList>
    </citation>
    <scope>NUCLEOTIDE SEQUENCE [LARGE SCALE GENOMIC DNA]</scope>
    <source>
        <strain>Bristol N2</strain>
    </source>
</reference>
<sequence>MATIPSVVREITLVGEQIFDHTQVVRAEIDRFVERFERNERHREFDGILRASHALVESSETPVEGLFDMGKMEHMTQCVDDITKKLQTLVEPKYQKEHDVYLEKVKEDQKKYVDVCREQAMNKMRSMTAHR</sequence>
<feature type="chain" id="PRO_0000420197" description="Biogenesis of lysosome-related organelles complex 1 subunit 5">
    <location>
        <begin position="1"/>
        <end position="131"/>
    </location>
</feature>
<gene>
    <name type="primary">mutd-1</name>
    <name type="ORF">C34D4.13</name>
</gene>